<keyword id="KW-0687">Ribonucleoprotein</keyword>
<keyword id="KW-0689">Ribosomal protein</keyword>
<comment type="subunit">
    <text evidence="1">Part of the 50S ribosomal subunit. Contacts protein L32.</text>
</comment>
<comment type="similarity">
    <text evidence="1">Belongs to the bacterial ribosomal protein bL17 family.</text>
</comment>
<sequence length="116" mass="13392">MRHKHGYRKLGRTSSHRKALLKNLAIALIEHNKIETGIYKAKELRSYIEKLTTVARVGDFNAHRHVFAYLQNKEATHKLVTEIAPKYAQRNGGYTRIQRTTFRRGDASTLATIEFV</sequence>
<feature type="chain" id="PRO_0000175529" description="Large ribosomal subunit protein bL17">
    <location>
        <begin position="1"/>
        <end position="116"/>
    </location>
</feature>
<organism>
    <name type="scientific">Helicobacter pylori (strain J99 / ATCC 700824)</name>
    <name type="common">Campylobacter pylori J99</name>
    <dbReference type="NCBI Taxonomy" id="85963"/>
    <lineage>
        <taxon>Bacteria</taxon>
        <taxon>Pseudomonadati</taxon>
        <taxon>Campylobacterota</taxon>
        <taxon>Epsilonproteobacteria</taxon>
        <taxon>Campylobacterales</taxon>
        <taxon>Helicobacteraceae</taxon>
        <taxon>Helicobacter</taxon>
    </lineage>
</organism>
<reference key="1">
    <citation type="journal article" date="1999" name="Nature">
        <title>Genomic sequence comparison of two unrelated isolates of the human gastric pathogen Helicobacter pylori.</title>
        <authorList>
            <person name="Alm R.A."/>
            <person name="Ling L.-S.L."/>
            <person name="Moir D.T."/>
            <person name="King B.L."/>
            <person name="Brown E.D."/>
            <person name="Doig P.C."/>
            <person name="Smith D.R."/>
            <person name="Noonan B."/>
            <person name="Guild B.C."/>
            <person name="deJonge B.L."/>
            <person name="Carmel G."/>
            <person name="Tummino P.J."/>
            <person name="Caruso A."/>
            <person name="Uria-Nickelsen M."/>
            <person name="Mills D.M."/>
            <person name="Ives C."/>
            <person name="Gibson R."/>
            <person name="Merberg D."/>
            <person name="Mills S.D."/>
            <person name="Jiang Q."/>
            <person name="Taylor D.E."/>
            <person name="Vovis G.F."/>
            <person name="Trust T.J."/>
        </authorList>
    </citation>
    <scope>NUCLEOTIDE SEQUENCE [LARGE SCALE GENOMIC DNA]</scope>
    <source>
        <strain>J99 / ATCC 700824</strain>
    </source>
</reference>
<proteinExistence type="inferred from homology"/>
<name>RL17_HELPJ</name>
<protein>
    <recommendedName>
        <fullName evidence="1">Large ribosomal subunit protein bL17</fullName>
    </recommendedName>
    <alternativeName>
        <fullName evidence="2">50S ribosomal protein L17</fullName>
    </alternativeName>
</protein>
<dbReference type="EMBL" id="AE001439">
    <property type="protein sequence ID" value="AAD06814.1"/>
    <property type="molecule type" value="Genomic_DNA"/>
</dbReference>
<dbReference type="PIR" id="D71832">
    <property type="entry name" value="D71832"/>
</dbReference>
<dbReference type="RefSeq" id="WP_001216124.1">
    <property type="nucleotide sequence ID" value="NZ_CP011330.1"/>
</dbReference>
<dbReference type="SMR" id="Q9ZJT6"/>
<dbReference type="KEGG" id="hpj:jhp_1212"/>
<dbReference type="PATRIC" id="fig|85963.30.peg.1359"/>
<dbReference type="eggNOG" id="COG0203">
    <property type="taxonomic scope" value="Bacteria"/>
</dbReference>
<dbReference type="Proteomes" id="UP000000804">
    <property type="component" value="Chromosome"/>
</dbReference>
<dbReference type="GO" id="GO:0022625">
    <property type="term" value="C:cytosolic large ribosomal subunit"/>
    <property type="evidence" value="ECO:0007669"/>
    <property type="project" value="TreeGrafter"/>
</dbReference>
<dbReference type="GO" id="GO:0003735">
    <property type="term" value="F:structural constituent of ribosome"/>
    <property type="evidence" value="ECO:0007669"/>
    <property type="project" value="InterPro"/>
</dbReference>
<dbReference type="GO" id="GO:0006412">
    <property type="term" value="P:translation"/>
    <property type="evidence" value="ECO:0007669"/>
    <property type="project" value="UniProtKB-UniRule"/>
</dbReference>
<dbReference type="FunFam" id="3.90.1030.10:FF:000003">
    <property type="entry name" value="50S ribosomal protein L17"/>
    <property type="match status" value="1"/>
</dbReference>
<dbReference type="Gene3D" id="3.90.1030.10">
    <property type="entry name" value="Ribosomal protein L17"/>
    <property type="match status" value="1"/>
</dbReference>
<dbReference type="HAMAP" id="MF_01368">
    <property type="entry name" value="Ribosomal_bL17"/>
    <property type="match status" value="1"/>
</dbReference>
<dbReference type="InterPro" id="IPR000456">
    <property type="entry name" value="Ribosomal_bL17"/>
</dbReference>
<dbReference type="InterPro" id="IPR047859">
    <property type="entry name" value="Ribosomal_bL17_CS"/>
</dbReference>
<dbReference type="InterPro" id="IPR036373">
    <property type="entry name" value="Ribosomal_bL17_sf"/>
</dbReference>
<dbReference type="NCBIfam" id="TIGR00059">
    <property type="entry name" value="L17"/>
    <property type="match status" value="1"/>
</dbReference>
<dbReference type="PANTHER" id="PTHR14413:SF16">
    <property type="entry name" value="LARGE RIBOSOMAL SUBUNIT PROTEIN BL17M"/>
    <property type="match status" value="1"/>
</dbReference>
<dbReference type="PANTHER" id="PTHR14413">
    <property type="entry name" value="RIBOSOMAL PROTEIN L17"/>
    <property type="match status" value="1"/>
</dbReference>
<dbReference type="Pfam" id="PF01196">
    <property type="entry name" value="Ribosomal_L17"/>
    <property type="match status" value="1"/>
</dbReference>
<dbReference type="SUPFAM" id="SSF64263">
    <property type="entry name" value="Prokaryotic ribosomal protein L17"/>
    <property type="match status" value="1"/>
</dbReference>
<dbReference type="PROSITE" id="PS01167">
    <property type="entry name" value="RIBOSOMAL_L17"/>
    <property type="match status" value="1"/>
</dbReference>
<evidence type="ECO:0000255" key="1">
    <source>
        <dbReference type="HAMAP-Rule" id="MF_01368"/>
    </source>
</evidence>
<evidence type="ECO:0000305" key="2"/>
<accession>Q9ZJT6</accession>
<gene>
    <name evidence="1" type="primary">rplQ</name>
    <name type="ordered locus">jhp_1212</name>
</gene>